<dbReference type="EMBL" id="AK003420">
    <property type="protein sequence ID" value="BAB22781.1"/>
    <property type="molecule type" value="mRNA"/>
</dbReference>
<dbReference type="EMBL" id="BC023116">
    <property type="protein sequence ID" value="AAH23116.1"/>
    <property type="molecule type" value="mRNA"/>
</dbReference>
<dbReference type="RefSeq" id="NP_001153621.1">
    <property type="nucleotide sequence ID" value="NM_001160149.1"/>
</dbReference>
<dbReference type="RefSeq" id="NP_081046.1">
    <property type="nucleotide sequence ID" value="NM_026770.1"/>
</dbReference>
<dbReference type="SMR" id="Q8R1U2"/>
<dbReference type="STRING" id="10090.ENSMUSP00000031051"/>
<dbReference type="iPTMnet" id="Q8R1U2"/>
<dbReference type="PhosphoSitePlus" id="Q8R1U2"/>
<dbReference type="CPTAC" id="non-CPTAC-3899"/>
<dbReference type="jPOST" id="Q8R1U2"/>
<dbReference type="PaxDb" id="10090-ENSMUSP00000031051"/>
<dbReference type="ProteomicsDB" id="281551"/>
<dbReference type="Pumba" id="Q8R1U2"/>
<dbReference type="GeneID" id="68567"/>
<dbReference type="KEGG" id="mmu:68567"/>
<dbReference type="AGR" id="MGI:1915817"/>
<dbReference type="CTD" id="10669"/>
<dbReference type="MGI" id="MGI:1915817">
    <property type="gene designation" value="Cgref1"/>
</dbReference>
<dbReference type="eggNOG" id="ENOG502S2TZ">
    <property type="taxonomic scope" value="Eukaryota"/>
</dbReference>
<dbReference type="InParanoid" id="Q8R1U2"/>
<dbReference type="OrthoDB" id="289247at2759"/>
<dbReference type="PhylomeDB" id="Q8R1U2"/>
<dbReference type="BioGRID-ORCS" id="68567">
    <property type="hits" value="0 hits in 81 CRISPR screens"/>
</dbReference>
<dbReference type="PRO" id="PR:Q8R1U2"/>
<dbReference type="Proteomes" id="UP000000589">
    <property type="component" value="Unplaced"/>
</dbReference>
<dbReference type="RNAct" id="Q8R1U2">
    <property type="molecule type" value="protein"/>
</dbReference>
<dbReference type="GO" id="GO:0005576">
    <property type="term" value="C:extracellular region"/>
    <property type="evidence" value="ECO:0007669"/>
    <property type="project" value="UniProtKB-SubCell"/>
</dbReference>
<dbReference type="GO" id="GO:0005509">
    <property type="term" value="F:calcium ion binding"/>
    <property type="evidence" value="ECO:0007669"/>
    <property type="project" value="InterPro"/>
</dbReference>
<dbReference type="GO" id="GO:0007155">
    <property type="term" value="P:cell adhesion"/>
    <property type="evidence" value="ECO:0007669"/>
    <property type="project" value="UniProtKB-KW"/>
</dbReference>
<dbReference type="GO" id="GO:0051726">
    <property type="term" value="P:regulation of cell cycle"/>
    <property type="evidence" value="ECO:0007669"/>
    <property type="project" value="UniProtKB-KW"/>
</dbReference>
<dbReference type="Gene3D" id="1.10.238.10">
    <property type="entry name" value="EF-hand"/>
    <property type="match status" value="1"/>
</dbReference>
<dbReference type="InterPro" id="IPR011992">
    <property type="entry name" value="EF-hand-dom_pair"/>
</dbReference>
<dbReference type="InterPro" id="IPR018247">
    <property type="entry name" value="EF_Hand_1_Ca_BS"/>
</dbReference>
<dbReference type="InterPro" id="IPR002048">
    <property type="entry name" value="EF_hand_dom"/>
</dbReference>
<dbReference type="InterPro" id="IPR052110">
    <property type="entry name" value="ER-Golgi_Adhesion_Reg"/>
</dbReference>
<dbReference type="PANTHER" id="PTHR23104:SF15">
    <property type="entry name" value="CELL GROWTH REGULATOR WITH EF HAND DOMAIN PROTEIN 1"/>
    <property type="match status" value="1"/>
</dbReference>
<dbReference type="PANTHER" id="PTHR23104">
    <property type="entry name" value="MULTIPLE COAGULATION FACTOR DEFICIENCY PROTEIN 2 NEURAL STEM CELL DERIVED NEURONAL SURVIVAL PROTEIN"/>
    <property type="match status" value="1"/>
</dbReference>
<dbReference type="SUPFAM" id="SSF47473">
    <property type="entry name" value="EF-hand"/>
    <property type="match status" value="1"/>
</dbReference>
<dbReference type="PROSITE" id="PS00018">
    <property type="entry name" value="EF_HAND_1"/>
    <property type="match status" value="2"/>
</dbReference>
<dbReference type="PROSITE" id="PS50222">
    <property type="entry name" value="EF_HAND_2"/>
    <property type="match status" value="2"/>
</dbReference>
<organism>
    <name type="scientific">Mus musculus</name>
    <name type="common">Mouse</name>
    <dbReference type="NCBI Taxonomy" id="10090"/>
    <lineage>
        <taxon>Eukaryota</taxon>
        <taxon>Metazoa</taxon>
        <taxon>Chordata</taxon>
        <taxon>Craniata</taxon>
        <taxon>Vertebrata</taxon>
        <taxon>Euteleostomi</taxon>
        <taxon>Mammalia</taxon>
        <taxon>Eutheria</taxon>
        <taxon>Euarchontoglires</taxon>
        <taxon>Glires</taxon>
        <taxon>Rodentia</taxon>
        <taxon>Myomorpha</taxon>
        <taxon>Muroidea</taxon>
        <taxon>Muridae</taxon>
        <taxon>Murinae</taxon>
        <taxon>Mus</taxon>
        <taxon>Mus</taxon>
    </lineage>
</organism>
<reference key="1">
    <citation type="journal article" date="2005" name="Science">
        <title>The transcriptional landscape of the mammalian genome.</title>
        <authorList>
            <person name="Carninci P."/>
            <person name="Kasukawa T."/>
            <person name="Katayama S."/>
            <person name="Gough J."/>
            <person name="Frith M.C."/>
            <person name="Maeda N."/>
            <person name="Oyama R."/>
            <person name="Ravasi T."/>
            <person name="Lenhard B."/>
            <person name="Wells C."/>
            <person name="Kodzius R."/>
            <person name="Shimokawa K."/>
            <person name="Bajic V.B."/>
            <person name="Brenner S.E."/>
            <person name="Batalov S."/>
            <person name="Forrest A.R."/>
            <person name="Zavolan M."/>
            <person name="Davis M.J."/>
            <person name="Wilming L.G."/>
            <person name="Aidinis V."/>
            <person name="Allen J.E."/>
            <person name="Ambesi-Impiombato A."/>
            <person name="Apweiler R."/>
            <person name="Aturaliya R.N."/>
            <person name="Bailey T.L."/>
            <person name="Bansal M."/>
            <person name="Baxter L."/>
            <person name="Beisel K.W."/>
            <person name="Bersano T."/>
            <person name="Bono H."/>
            <person name="Chalk A.M."/>
            <person name="Chiu K.P."/>
            <person name="Choudhary V."/>
            <person name="Christoffels A."/>
            <person name="Clutterbuck D.R."/>
            <person name="Crowe M.L."/>
            <person name="Dalla E."/>
            <person name="Dalrymple B.P."/>
            <person name="de Bono B."/>
            <person name="Della Gatta G."/>
            <person name="di Bernardo D."/>
            <person name="Down T."/>
            <person name="Engstrom P."/>
            <person name="Fagiolini M."/>
            <person name="Faulkner G."/>
            <person name="Fletcher C.F."/>
            <person name="Fukushima T."/>
            <person name="Furuno M."/>
            <person name="Futaki S."/>
            <person name="Gariboldi M."/>
            <person name="Georgii-Hemming P."/>
            <person name="Gingeras T.R."/>
            <person name="Gojobori T."/>
            <person name="Green R.E."/>
            <person name="Gustincich S."/>
            <person name="Harbers M."/>
            <person name="Hayashi Y."/>
            <person name="Hensch T.K."/>
            <person name="Hirokawa N."/>
            <person name="Hill D."/>
            <person name="Huminiecki L."/>
            <person name="Iacono M."/>
            <person name="Ikeo K."/>
            <person name="Iwama A."/>
            <person name="Ishikawa T."/>
            <person name="Jakt M."/>
            <person name="Kanapin A."/>
            <person name="Katoh M."/>
            <person name="Kawasawa Y."/>
            <person name="Kelso J."/>
            <person name="Kitamura H."/>
            <person name="Kitano H."/>
            <person name="Kollias G."/>
            <person name="Krishnan S.P."/>
            <person name="Kruger A."/>
            <person name="Kummerfeld S.K."/>
            <person name="Kurochkin I.V."/>
            <person name="Lareau L.F."/>
            <person name="Lazarevic D."/>
            <person name="Lipovich L."/>
            <person name="Liu J."/>
            <person name="Liuni S."/>
            <person name="McWilliam S."/>
            <person name="Madan Babu M."/>
            <person name="Madera M."/>
            <person name="Marchionni L."/>
            <person name="Matsuda H."/>
            <person name="Matsuzawa S."/>
            <person name="Miki H."/>
            <person name="Mignone F."/>
            <person name="Miyake S."/>
            <person name="Morris K."/>
            <person name="Mottagui-Tabar S."/>
            <person name="Mulder N."/>
            <person name="Nakano N."/>
            <person name="Nakauchi H."/>
            <person name="Ng P."/>
            <person name="Nilsson R."/>
            <person name="Nishiguchi S."/>
            <person name="Nishikawa S."/>
            <person name="Nori F."/>
            <person name="Ohara O."/>
            <person name="Okazaki Y."/>
            <person name="Orlando V."/>
            <person name="Pang K.C."/>
            <person name="Pavan W.J."/>
            <person name="Pavesi G."/>
            <person name="Pesole G."/>
            <person name="Petrovsky N."/>
            <person name="Piazza S."/>
            <person name="Reed J."/>
            <person name="Reid J.F."/>
            <person name="Ring B.Z."/>
            <person name="Ringwald M."/>
            <person name="Rost B."/>
            <person name="Ruan Y."/>
            <person name="Salzberg S.L."/>
            <person name="Sandelin A."/>
            <person name="Schneider C."/>
            <person name="Schoenbach C."/>
            <person name="Sekiguchi K."/>
            <person name="Semple C.A."/>
            <person name="Seno S."/>
            <person name="Sessa L."/>
            <person name="Sheng Y."/>
            <person name="Shibata Y."/>
            <person name="Shimada H."/>
            <person name="Shimada K."/>
            <person name="Silva D."/>
            <person name="Sinclair B."/>
            <person name="Sperling S."/>
            <person name="Stupka E."/>
            <person name="Sugiura K."/>
            <person name="Sultana R."/>
            <person name="Takenaka Y."/>
            <person name="Taki K."/>
            <person name="Tammoja K."/>
            <person name="Tan S.L."/>
            <person name="Tang S."/>
            <person name="Taylor M.S."/>
            <person name="Tegner J."/>
            <person name="Teichmann S.A."/>
            <person name="Ueda H.R."/>
            <person name="van Nimwegen E."/>
            <person name="Verardo R."/>
            <person name="Wei C.L."/>
            <person name="Yagi K."/>
            <person name="Yamanishi H."/>
            <person name="Zabarovsky E."/>
            <person name="Zhu S."/>
            <person name="Zimmer A."/>
            <person name="Hide W."/>
            <person name="Bult C."/>
            <person name="Grimmond S.M."/>
            <person name="Teasdale R.D."/>
            <person name="Liu E.T."/>
            <person name="Brusic V."/>
            <person name="Quackenbush J."/>
            <person name="Wahlestedt C."/>
            <person name="Mattick J.S."/>
            <person name="Hume D.A."/>
            <person name="Kai C."/>
            <person name="Sasaki D."/>
            <person name="Tomaru Y."/>
            <person name="Fukuda S."/>
            <person name="Kanamori-Katayama M."/>
            <person name="Suzuki M."/>
            <person name="Aoki J."/>
            <person name="Arakawa T."/>
            <person name="Iida J."/>
            <person name="Imamura K."/>
            <person name="Itoh M."/>
            <person name="Kato T."/>
            <person name="Kawaji H."/>
            <person name="Kawagashira N."/>
            <person name="Kawashima T."/>
            <person name="Kojima M."/>
            <person name="Kondo S."/>
            <person name="Konno H."/>
            <person name="Nakano K."/>
            <person name="Ninomiya N."/>
            <person name="Nishio T."/>
            <person name="Okada M."/>
            <person name="Plessy C."/>
            <person name="Shibata K."/>
            <person name="Shiraki T."/>
            <person name="Suzuki S."/>
            <person name="Tagami M."/>
            <person name="Waki K."/>
            <person name="Watahiki A."/>
            <person name="Okamura-Oho Y."/>
            <person name="Suzuki H."/>
            <person name="Kawai J."/>
            <person name="Hayashizaki Y."/>
        </authorList>
    </citation>
    <scope>NUCLEOTIDE SEQUENCE [LARGE SCALE MRNA]</scope>
    <source>
        <strain>C57BL/6J</strain>
        <tissue>Embryo</tissue>
    </source>
</reference>
<reference key="2">
    <citation type="journal article" date="2004" name="Genome Res.">
        <title>The status, quality, and expansion of the NIH full-length cDNA project: the Mammalian Gene Collection (MGC).</title>
        <authorList>
            <consortium name="The MGC Project Team"/>
        </authorList>
    </citation>
    <scope>NUCLEOTIDE SEQUENCE [LARGE SCALE MRNA]</scope>
    <source>
        <tissue>Colon</tissue>
    </source>
</reference>
<reference key="3">
    <citation type="journal article" date="2010" name="Cell">
        <title>A tissue-specific atlas of mouse protein phosphorylation and expression.</title>
        <authorList>
            <person name="Huttlin E.L."/>
            <person name="Jedrychowski M.P."/>
            <person name="Elias J.E."/>
            <person name="Goswami T."/>
            <person name="Rad R."/>
            <person name="Beausoleil S.A."/>
            <person name="Villen J."/>
            <person name="Haas W."/>
            <person name="Sowa M.E."/>
            <person name="Gygi S.P."/>
        </authorList>
    </citation>
    <scope>PHOSPHORYLATION [LARGE SCALE ANALYSIS] AT SER-228</scope>
    <scope>IDENTIFICATION BY MASS SPECTROMETRY [LARGE SCALE ANALYSIS]</scope>
    <source>
        <tissue>Kidney</tissue>
    </source>
</reference>
<comment type="function">
    <text evidence="1">Mediates cell-cell adhesion in a calcium-dependent manner. Able to inhibit growth in several cell lines (By similarity).</text>
</comment>
<comment type="subcellular location">
    <subcellularLocation>
        <location evidence="1">Secreted</location>
    </subcellularLocation>
</comment>
<comment type="domain">
    <text evidence="1">Both EF-hands are required for function.</text>
</comment>
<comment type="PTM">
    <text evidence="1">Probably digested extracellularly by an unknown serine protease generating extremely hydrophobic bioactive peptides.</text>
</comment>
<protein>
    <recommendedName>
        <fullName evidence="6">Cell growth regulator with EF hand domain protein 1</fullName>
    </recommendedName>
    <alternativeName>
        <fullName>Cell growth regulatory gene 11 protein</fullName>
    </alternativeName>
    <alternativeName>
        <fullName>Hydrophobestin</fullName>
    </alternativeName>
</protein>
<sequence length="281" mass="30847">MFQWLMQALMLPLLLLPLGRAAPKDGVARLDPEVQQQLTPNPFQPGPEQLRHLQNYLKGLEKMEEDPEHMDREQVLLSLFALHDYDQNGQLDGLELLSMLTAALAPGAAHFPINPVILVVDSVLETQDLDGDGLMTPAELINFPEVPKHTESLPPALQEPQPAGSQPLLANSPLQSETQQSLGTKEEIRGQVEAKRASLEPEQEAGHQTEGKVDTLSPEEEARGQAESEGDVPGPREGAEEQVEIKDNEGEAKELLVETLESLNTPNEAEAHSIQLENDEI</sequence>
<proteinExistence type="evidence at protein level"/>
<name>CGRE1_MOUSE</name>
<accession>Q8R1U2</accession>
<accession>Q9D1K1</accession>
<gene>
    <name evidence="7" type="primary">Cgref1</name>
    <name type="synonym">Cgr11</name>
</gene>
<feature type="signal peptide" evidence="3">
    <location>
        <begin position="1"/>
        <end position="21"/>
    </location>
</feature>
<feature type="chain" id="PRO_0000073875" description="Cell growth regulator with EF hand domain protein 1">
    <location>
        <begin position="22"/>
        <end position="281"/>
    </location>
</feature>
<feature type="domain" description="EF-hand 1" evidence="4">
    <location>
        <begin position="71"/>
        <end position="106"/>
    </location>
</feature>
<feature type="domain" description="EF-hand 2" evidence="4">
    <location>
        <begin position="115"/>
        <end position="150"/>
    </location>
</feature>
<feature type="region of interest" description="Disordered" evidence="5">
    <location>
        <begin position="148"/>
        <end position="281"/>
    </location>
</feature>
<feature type="compositionally biased region" description="Polar residues" evidence="5">
    <location>
        <begin position="168"/>
        <end position="183"/>
    </location>
</feature>
<feature type="compositionally biased region" description="Basic and acidic residues" evidence="5">
    <location>
        <begin position="184"/>
        <end position="213"/>
    </location>
</feature>
<feature type="compositionally biased region" description="Basic and acidic residues" evidence="5">
    <location>
        <begin position="237"/>
        <end position="256"/>
    </location>
</feature>
<feature type="binding site" evidence="4">
    <location>
        <position position="84"/>
    </location>
    <ligand>
        <name>Ca(2+)</name>
        <dbReference type="ChEBI" id="CHEBI:29108"/>
        <label>1</label>
    </ligand>
</feature>
<feature type="binding site" evidence="4">
    <location>
        <position position="86"/>
    </location>
    <ligand>
        <name>Ca(2+)</name>
        <dbReference type="ChEBI" id="CHEBI:29108"/>
        <label>1</label>
    </ligand>
</feature>
<feature type="binding site" evidence="4">
    <location>
        <position position="88"/>
    </location>
    <ligand>
        <name>Ca(2+)</name>
        <dbReference type="ChEBI" id="CHEBI:29108"/>
        <label>1</label>
    </ligand>
</feature>
<feature type="binding site" evidence="4">
    <location>
        <position position="90"/>
    </location>
    <ligand>
        <name>Ca(2+)</name>
        <dbReference type="ChEBI" id="CHEBI:29108"/>
        <label>1</label>
    </ligand>
</feature>
<feature type="binding site" evidence="4">
    <location>
        <position position="95"/>
    </location>
    <ligand>
        <name>Ca(2+)</name>
        <dbReference type="ChEBI" id="CHEBI:29108"/>
        <label>1</label>
    </ligand>
</feature>
<feature type="binding site" evidence="4">
    <location>
        <position position="128"/>
    </location>
    <ligand>
        <name>Ca(2+)</name>
        <dbReference type="ChEBI" id="CHEBI:29108"/>
        <label>2</label>
    </ligand>
</feature>
<feature type="binding site" evidence="4">
    <location>
        <position position="130"/>
    </location>
    <ligand>
        <name>Ca(2+)</name>
        <dbReference type="ChEBI" id="CHEBI:29108"/>
        <label>2</label>
    </ligand>
</feature>
<feature type="binding site" evidence="4">
    <location>
        <position position="132"/>
    </location>
    <ligand>
        <name>Ca(2+)</name>
        <dbReference type="ChEBI" id="CHEBI:29108"/>
        <label>2</label>
    </ligand>
</feature>
<feature type="binding site" evidence="4">
    <location>
        <position position="139"/>
    </location>
    <ligand>
        <name>Ca(2+)</name>
        <dbReference type="ChEBI" id="CHEBI:29108"/>
        <label>2</label>
    </ligand>
</feature>
<feature type="modified residue" description="Phosphoserine" evidence="2">
    <location>
        <position position="217"/>
    </location>
</feature>
<feature type="modified residue" description="Phosphoserine" evidence="8">
    <location>
        <position position="228"/>
    </location>
</feature>
<feature type="sequence conflict" description="In Ref. 1; BAB22781." evidence="6" ref="1">
    <location>
        <position position="187"/>
    </location>
</feature>
<feature type="sequence conflict" description="In Ref. 1; BAB22781." evidence="6" ref="1">
    <original>G</original>
    <variation>S</variation>
    <location>
        <position position="190"/>
    </location>
</feature>
<keyword id="KW-0106">Calcium</keyword>
<keyword id="KW-0130">Cell adhesion</keyword>
<keyword id="KW-0131">Cell cycle</keyword>
<keyword id="KW-0338">Growth arrest</keyword>
<keyword id="KW-0479">Metal-binding</keyword>
<keyword id="KW-0597">Phosphoprotein</keyword>
<keyword id="KW-1185">Reference proteome</keyword>
<keyword id="KW-0677">Repeat</keyword>
<keyword id="KW-0964">Secreted</keyword>
<keyword id="KW-0732">Signal</keyword>
<evidence type="ECO:0000250" key="1"/>
<evidence type="ECO:0000250" key="2">
    <source>
        <dbReference type="UniProtKB" id="P97586"/>
    </source>
</evidence>
<evidence type="ECO:0000255" key="3"/>
<evidence type="ECO:0000255" key="4">
    <source>
        <dbReference type="PROSITE-ProRule" id="PRU00448"/>
    </source>
</evidence>
<evidence type="ECO:0000256" key="5">
    <source>
        <dbReference type="SAM" id="MobiDB-lite"/>
    </source>
</evidence>
<evidence type="ECO:0000305" key="6"/>
<evidence type="ECO:0000312" key="7">
    <source>
        <dbReference type="MGI" id="MGI:1915817"/>
    </source>
</evidence>
<evidence type="ECO:0007744" key="8">
    <source>
    </source>
</evidence>